<organism>
    <name type="scientific">Clostridium perfringens (strain 13 / Type A)</name>
    <dbReference type="NCBI Taxonomy" id="195102"/>
    <lineage>
        <taxon>Bacteria</taxon>
        <taxon>Bacillati</taxon>
        <taxon>Bacillota</taxon>
        <taxon>Clostridia</taxon>
        <taxon>Eubacteriales</taxon>
        <taxon>Clostridiaceae</taxon>
        <taxon>Clostridium</taxon>
    </lineage>
</organism>
<comment type="catalytic activity">
    <reaction>
        <text>L-histidine + H(+) = histamine + CO2</text>
        <dbReference type="Rhea" id="RHEA:20840"/>
        <dbReference type="ChEBI" id="CHEBI:15378"/>
        <dbReference type="ChEBI" id="CHEBI:16526"/>
        <dbReference type="ChEBI" id="CHEBI:57595"/>
        <dbReference type="ChEBI" id="CHEBI:58432"/>
        <dbReference type="EC" id="4.1.1.22"/>
    </reaction>
</comment>
<comment type="cofactor">
    <cofactor>
        <name>pyruvate</name>
        <dbReference type="ChEBI" id="CHEBI:15361"/>
    </cofactor>
    <text>Binds 1 pyruvoyl group covalently per subunit.</text>
</comment>
<comment type="subunit">
    <text>The proenzyme is a hexamer of identical pi chains; each pi chain monomer is cleaved to form a small (or beta) chain and a large (or alpha) chain by non-hydrolytic self-catalysis.</text>
</comment>
<reference key="1">
    <citation type="journal article" date="2002" name="Proc. Natl. Acad. Sci. U.S.A.">
        <title>Complete genome sequence of Clostridium perfringens, an anaerobic flesh-eater.</title>
        <authorList>
            <person name="Shimizu T."/>
            <person name="Ohtani K."/>
            <person name="Hirakawa H."/>
            <person name="Ohshima K."/>
            <person name="Yamashita A."/>
            <person name="Shiba T."/>
            <person name="Ogasawara N."/>
            <person name="Hattori M."/>
            <person name="Kuhara S."/>
            <person name="Hayashi H."/>
        </authorList>
    </citation>
    <scope>NUCLEOTIDE SEQUENCE [LARGE SCALE GENOMIC DNA]</scope>
    <source>
        <strain>13 / Type A</strain>
    </source>
</reference>
<reference key="2">
    <citation type="journal article" date="1985" name="J. Biol. Chem.">
        <title>Pyruvoyl-dependent histidine decarboxylases. Preparation and amino acid sequences of the beta chains of histidine decarboxylase from Clostridium perfringens and Lactobacillus buchneri.</title>
        <authorList>
            <person name="Huynh Q.K."/>
            <person name="Snell E.E."/>
        </authorList>
    </citation>
    <scope>PROTEIN SEQUENCE OF 12-130</scope>
    <scope>PYRUVATE FORMATION AT SER-98</scope>
</reference>
<keyword id="KW-0210">Decarboxylase</keyword>
<keyword id="KW-0903">Direct protein sequencing</keyword>
<keyword id="KW-0456">Lyase</keyword>
<keyword id="KW-0670">Pyruvate</keyword>
<keyword id="KW-1185">Reference proteome</keyword>
<keyword id="KW-0865">Zymogen</keyword>
<gene>
    <name type="primary">hdc</name>
    <name type="ordered locus">CPE0390</name>
</gene>
<name>DCHS_CLOPE</name>
<protein>
    <recommendedName>
        <fullName>Histidine decarboxylase proenzyme</fullName>
        <ecNumber>4.1.1.22</ecNumber>
    </recommendedName>
    <alternativeName>
        <fullName>Pi chain</fullName>
    </alternativeName>
    <component>
        <recommendedName>
            <fullName>Histidine decarboxylase beta chain</fullName>
        </recommendedName>
    </component>
    <component>
        <recommendedName>
            <fullName>Histidine decarboxylase alpha chain</fullName>
        </recommendedName>
    </component>
</protein>
<sequence>MNKNLEANRNRTLSEGIHKNIKVRAPKIDKTAISPYDRYCDGYGMPGAYGNGYVSVLKVSVGTVKKTDDILLDGIVSYDRAEINDAYVGQINMLTASSFCGVAGQVWGHDLATHDSIAKDEIKPLYELKQFDGTPLKVYDAKPLLEAGIELFGTEKNRRFTTAPGAHVICANKSATAYRPKENRPLKEGEAYGVWSFIALSLSNDRDHCADLFIEDAGLWTKNDNPEDLKKFLEDHRKAVTWSVVECGRDSHVVFERTYIGFAYVIMKPGEIGNALTCAPYVTLARDAVPSEGFPSLNRISLSQWLDDMNFDSLVNPSKK</sequence>
<dbReference type="EC" id="4.1.1.22"/>
<dbReference type="EMBL" id="BA000016">
    <property type="protein sequence ID" value="BAB80096.1"/>
    <property type="molecule type" value="Genomic_DNA"/>
</dbReference>
<dbReference type="PIR" id="A33770">
    <property type="entry name" value="DCCLHP"/>
</dbReference>
<dbReference type="RefSeq" id="WP_011009781.1">
    <property type="nucleotide sequence ID" value="NC_003366.1"/>
</dbReference>
<dbReference type="SMR" id="P0C2E5"/>
<dbReference type="STRING" id="195102.gene:10489646"/>
<dbReference type="KEGG" id="cpe:CPE0390"/>
<dbReference type="HOGENOM" id="CLU_942196_0_0_9"/>
<dbReference type="Proteomes" id="UP000000818">
    <property type="component" value="Chromosome"/>
</dbReference>
<dbReference type="GO" id="GO:0004398">
    <property type="term" value="F:histidine decarboxylase activity"/>
    <property type="evidence" value="ECO:0007669"/>
    <property type="project" value="UniProtKB-EC"/>
</dbReference>
<dbReference type="GO" id="GO:0006547">
    <property type="term" value="P:L-histidine metabolic process"/>
    <property type="evidence" value="ECO:0007669"/>
    <property type="project" value="InterPro"/>
</dbReference>
<dbReference type="Gene3D" id="4.10.510.10">
    <property type="entry name" value="Pyruvoyl-Dependent Histidine Decarboxylas, subunit A"/>
    <property type="match status" value="1"/>
</dbReference>
<dbReference type="Gene3D" id="3.50.20.10">
    <property type="entry name" value="Pyruvoyl-Dependent Histidine Decarboxylase, subunit B"/>
    <property type="match status" value="1"/>
</dbReference>
<dbReference type="InterPro" id="IPR003427">
    <property type="entry name" value="His_de-COase_proenz"/>
</dbReference>
<dbReference type="InterPro" id="IPR016106">
    <property type="entry name" value="Pyr-dep_his-deCO2ase_N"/>
</dbReference>
<dbReference type="InterPro" id="IPR016104">
    <property type="entry name" value="Pyr-dep_his/arg-deCO2ase"/>
</dbReference>
<dbReference type="InterPro" id="IPR016105">
    <property type="entry name" value="Pyr-dep_his/arg-deCO2ase_sand"/>
</dbReference>
<dbReference type="NCBIfam" id="TIGR00541">
    <property type="entry name" value="hisDCase_pyru"/>
    <property type="match status" value="1"/>
</dbReference>
<dbReference type="Pfam" id="PF02329">
    <property type="entry name" value="HDC"/>
    <property type="match status" value="1"/>
</dbReference>
<dbReference type="PIRSF" id="PIRSF001341">
    <property type="entry name" value="His_decarboxylas"/>
    <property type="match status" value="1"/>
</dbReference>
<dbReference type="SFLD" id="SFLDS00055">
    <property type="entry name" value="Pyruvoyl-Dependent_Histidine/A"/>
    <property type="match status" value="1"/>
</dbReference>
<dbReference type="SFLD" id="SFLDF00466">
    <property type="entry name" value="Pyruvoyl-dependent_histidine_d"/>
    <property type="match status" value="1"/>
</dbReference>
<dbReference type="SFLD" id="SFLDG01171">
    <property type="entry name" value="Pyruvoyl-dependent_histidine_d"/>
    <property type="match status" value="1"/>
</dbReference>
<dbReference type="SUPFAM" id="SSF56271">
    <property type="entry name" value="Pyruvoyl-dependent histidine and arginine decarboxylases"/>
    <property type="match status" value="1"/>
</dbReference>
<accession>P0C2E5</accession>
<accession>P04194</accession>
<feature type="initiator methionine" description="Removed">
    <location>
        <position position="1"/>
    </location>
</feature>
<feature type="propeptide" id="PRO_0000029950" evidence="2">
    <location>
        <begin position="2"/>
        <end position="11"/>
    </location>
</feature>
<feature type="chain" id="PRO_0000029951" description="Histidine decarboxylase beta chain">
    <location>
        <begin position="12"/>
        <end position="97"/>
    </location>
</feature>
<feature type="chain" id="PRO_0000029952" description="Histidine decarboxylase alpha chain">
    <location>
        <begin position="98"/>
        <end position="320"/>
    </location>
</feature>
<feature type="active site" description="Proton donor" evidence="1">
    <location>
        <position position="215"/>
    </location>
</feature>
<feature type="site" description="Cleavage (non-hydrolytic)">
    <location>
        <begin position="97"/>
        <end position="98"/>
    </location>
</feature>
<feature type="modified residue" description="Pyruvic acid (Ser)" evidence="2">
    <location>
        <position position="98"/>
    </location>
</feature>
<feature type="sequence conflict" description="In Ref. 2; AA sequence." evidence="3" ref="2">
    <original>N</original>
    <variation>D</variation>
    <location>
        <position position="51"/>
    </location>
</feature>
<feature type="sequence conflict" description="In Ref. 2; AA sequence." evidence="3" ref="2">
    <original>H</original>
    <variation>V</variation>
    <location>
        <position position="109"/>
    </location>
</feature>
<feature type="sequence conflict" description="In Ref. 2; AA sequence." evidence="3" ref="2">
    <original>H</original>
    <variation>S</variation>
    <location>
        <position position="114"/>
    </location>
</feature>
<feature type="sequence conflict" description="In Ref. 2; AA sequence." evidence="3" ref="2">
    <original>K</original>
    <variation>N</variation>
    <location>
        <position position="119"/>
    </location>
</feature>
<feature type="sequence conflict" description="In Ref. 2; AA sequence." evidence="3" ref="2">
    <original>K</original>
    <variation>F</variation>
    <location>
        <position position="123"/>
    </location>
</feature>
<feature type="sequence conflict" description="In Ref. 2; AA sequence." evidence="3" ref="2">
    <original>K</original>
    <variation>M</variation>
    <location>
        <position position="129"/>
    </location>
</feature>
<proteinExistence type="evidence at protein level"/>
<evidence type="ECO:0000250" key="1"/>
<evidence type="ECO:0000269" key="2">
    <source>
    </source>
</evidence>
<evidence type="ECO:0000305" key="3"/>